<comment type="function">
    <text evidence="1">Mitochondrial solute carriers shuttle metabolites, nucleotides, and cofactors through the mitochondrial inner membrane. Transports folate across the inner membranes of mitochondria (By similarity).</text>
</comment>
<comment type="subcellular location">
    <subcellularLocation>
        <location evidence="1">Mitochondrion inner membrane</location>
        <topology evidence="1">Multi-pass membrane protein</topology>
    </subcellularLocation>
</comment>
<comment type="similarity">
    <text evidence="3">Belongs to the mitochondrial carrier (TC 2.A.29) family.</text>
</comment>
<accession>Q54QN2</accession>
<dbReference type="EMBL" id="AAFI02000056">
    <property type="protein sequence ID" value="EAL65642.1"/>
    <property type="molecule type" value="Genomic_DNA"/>
</dbReference>
<dbReference type="RefSeq" id="XP_638991.1">
    <property type="nucleotide sequence ID" value="XM_633899.1"/>
</dbReference>
<dbReference type="SMR" id="Q54QN2"/>
<dbReference type="FunCoup" id="Q54QN2">
    <property type="interactions" value="24"/>
</dbReference>
<dbReference type="STRING" id="44689.Q54QN2"/>
<dbReference type="PaxDb" id="44689-DDB0237607"/>
<dbReference type="EnsemblProtists" id="EAL65642">
    <property type="protein sequence ID" value="EAL65642"/>
    <property type="gene ID" value="DDB_G0283751"/>
</dbReference>
<dbReference type="GeneID" id="8624237"/>
<dbReference type="KEGG" id="ddi:DDB_G0283751"/>
<dbReference type="dictyBase" id="DDB_G0283751">
    <property type="gene designation" value="mcfM"/>
</dbReference>
<dbReference type="VEuPathDB" id="AmoebaDB:DDB_G0283751"/>
<dbReference type="eggNOG" id="KOG0764">
    <property type="taxonomic scope" value="Eukaryota"/>
</dbReference>
<dbReference type="HOGENOM" id="CLU_015166_6_4_1"/>
<dbReference type="InParanoid" id="Q54QN2"/>
<dbReference type="OMA" id="QLIYREE"/>
<dbReference type="PhylomeDB" id="Q54QN2"/>
<dbReference type="Reactome" id="R-DDI-196757">
    <property type="pathway name" value="Metabolism of folate and pterines"/>
</dbReference>
<dbReference type="PRO" id="PR:Q54QN2"/>
<dbReference type="Proteomes" id="UP000002195">
    <property type="component" value="Chromosome 4"/>
</dbReference>
<dbReference type="GO" id="GO:0005743">
    <property type="term" value="C:mitochondrial inner membrane"/>
    <property type="evidence" value="ECO:0007669"/>
    <property type="project" value="UniProtKB-SubCell"/>
</dbReference>
<dbReference type="GO" id="GO:0005739">
    <property type="term" value="C:mitochondrion"/>
    <property type="evidence" value="ECO:0000318"/>
    <property type="project" value="GO_Central"/>
</dbReference>
<dbReference type="GO" id="GO:0015230">
    <property type="term" value="F:FAD transmembrane transporter activity"/>
    <property type="evidence" value="ECO:0000318"/>
    <property type="project" value="GO_Central"/>
</dbReference>
<dbReference type="GO" id="GO:0008517">
    <property type="term" value="F:folic acid transmembrane transporter activity"/>
    <property type="evidence" value="ECO:0000318"/>
    <property type="project" value="GO_Central"/>
</dbReference>
<dbReference type="GO" id="GO:0055085">
    <property type="term" value="P:transmembrane transport"/>
    <property type="evidence" value="ECO:0000318"/>
    <property type="project" value="GO_Central"/>
</dbReference>
<dbReference type="FunFam" id="1.50.40.10:FF:000295">
    <property type="entry name" value="Mitochondrial substrate carrier family protein M"/>
    <property type="match status" value="1"/>
</dbReference>
<dbReference type="Gene3D" id="1.50.40.10">
    <property type="entry name" value="Mitochondrial carrier domain"/>
    <property type="match status" value="1"/>
</dbReference>
<dbReference type="InterPro" id="IPR018108">
    <property type="entry name" value="Mitochondrial_sb/sol_carrier"/>
</dbReference>
<dbReference type="InterPro" id="IPR023395">
    <property type="entry name" value="Mt_carrier_dom_sf"/>
</dbReference>
<dbReference type="InterPro" id="IPR044712">
    <property type="entry name" value="SLC25A32-like"/>
</dbReference>
<dbReference type="PANTHER" id="PTHR45683">
    <property type="entry name" value="MITOCHONDRIAL NICOTINAMIDE ADENINE DINUCLEOTIDE TRANSPORTER 1-RELATED-RELATED"/>
    <property type="match status" value="1"/>
</dbReference>
<dbReference type="Pfam" id="PF00153">
    <property type="entry name" value="Mito_carr"/>
    <property type="match status" value="3"/>
</dbReference>
<dbReference type="SUPFAM" id="SSF103506">
    <property type="entry name" value="Mitochondrial carrier"/>
    <property type="match status" value="1"/>
</dbReference>
<dbReference type="PROSITE" id="PS50920">
    <property type="entry name" value="SOLCAR"/>
    <property type="match status" value="3"/>
</dbReference>
<gene>
    <name type="primary">mcfM</name>
    <name type="synonym">slc25a32</name>
    <name type="ORF">DDB_G0283751</name>
</gene>
<organism>
    <name type="scientific">Dictyostelium discoideum</name>
    <name type="common">Social amoeba</name>
    <dbReference type="NCBI Taxonomy" id="44689"/>
    <lineage>
        <taxon>Eukaryota</taxon>
        <taxon>Amoebozoa</taxon>
        <taxon>Evosea</taxon>
        <taxon>Eumycetozoa</taxon>
        <taxon>Dictyostelia</taxon>
        <taxon>Dictyosteliales</taxon>
        <taxon>Dictyosteliaceae</taxon>
        <taxon>Dictyostelium</taxon>
    </lineage>
</organism>
<proteinExistence type="inferred from homology"/>
<feature type="chain" id="PRO_0000385533" description="Mitochondrial substrate carrier family protein M">
    <location>
        <begin position="1"/>
        <end position="306"/>
    </location>
</feature>
<feature type="topological domain" description="Mitochondrial intermembrane" evidence="1">
    <location>
        <begin position="1"/>
        <end position="10"/>
    </location>
</feature>
<feature type="transmembrane region" description="Helical; Name=1" evidence="2">
    <location>
        <begin position="11"/>
        <end position="31"/>
    </location>
</feature>
<feature type="topological domain" description="Mitochondrial matrix" evidence="1">
    <location>
        <begin position="32"/>
        <end position="72"/>
    </location>
</feature>
<feature type="transmembrane region" description="Helical; Name=2" evidence="2">
    <location>
        <begin position="73"/>
        <end position="89"/>
    </location>
</feature>
<feature type="topological domain" description="Mitochondrial intermembrane" evidence="1">
    <location>
        <begin position="90"/>
        <end position="113"/>
    </location>
</feature>
<feature type="transmembrane region" description="Helical; Name=3" evidence="2">
    <location>
        <begin position="114"/>
        <end position="134"/>
    </location>
</feature>
<feature type="topological domain" description="Mitochondrial matrix" evidence="1">
    <location>
        <begin position="135"/>
        <end position="163"/>
    </location>
</feature>
<feature type="transmembrane region" description="Helical; Name=4" evidence="2">
    <location>
        <begin position="164"/>
        <end position="184"/>
    </location>
</feature>
<feature type="topological domain" description="Mitochondrial intermembrane" evidence="1">
    <location>
        <begin position="185"/>
        <end position="211"/>
    </location>
</feature>
<feature type="transmembrane region" description="Helical; Name=5" evidence="2">
    <location>
        <begin position="212"/>
        <end position="232"/>
    </location>
</feature>
<feature type="topological domain" description="Mitochondrial matrix" evidence="1">
    <location>
        <begin position="233"/>
        <end position="278"/>
    </location>
</feature>
<feature type="transmembrane region" description="Helical; Name=6" evidence="2">
    <location>
        <begin position="279"/>
        <end position="296"/>
    </location>
</feature>
<feature type="topological domain" description="Mitochondrial intermembrane" evidence="1">
    <location>
        <begin position="297"/>
        <end position="306"/>
    </location>
</feature>
<feature type="repeat" description="Solcar 1">
    <location>
        <begin position="5"/>
        <end position="98"/>
    </location>
</feature>
<feature type="repeat" description="Solcar 2">
    <location>
        <begin position="108"/>
        <end position="195"/>
    </location>
</feature>
<feature type="repeat" description="Solcar 3">
    <location>
        <begin position="207"/>
        <end position="299"/>
    </location>
</feature>
<sequence length="306" mass="34343">MRYILNNNVEGTSALLGSTVATAFLQPFDFLKIRLQGSGFASGGDLNKFKRVGVIDTCKNVLKNEGIKQFWRGSSPTIVASGIAWGTYMHFYEAYKNILKSKYNVTQLNTFDHFICAVGASATQVFITNPIFLIKTRMQLQTPGSANYYTGIFDGIKKTVKVEGFKGLYKGVIPSLWLTFHGGIQMSSYEHIKFYFSSNSGKSLDSLNASEIFIASSISKFLASTILYPFQVVKTRLQDERNIPNQNNVRVYNGTKDVIFKILKNEGIIGFYRGLVPNTLKVIPNTSITLLLYEEIKKSFNYIINE</sequence>
<protein>
    <recommendedName>
        <fullName>Mitochondrial substrate carrier family protein M</fullName>
    </recommendedName>
    <alternativeName>
        <fullName>Solute carrier family 25 member 32 homolog</fullName>
    </alternativeName>
</protein>
<keyword id="KW-0472">Membrane</keyword>
<keyword id="KW-0496">Mitochondrion</keyword>
<keyword id="KW-0999">Mitochondrion inner membrane</keyword>
<keyword id="KW-1185">Reference proteome</keyword>
<keyword id="KW-0677">Repeat</keyword>
<keyword id="KW-0812">Transmembrane</keyword>
<keyword id="KW-1133">Transmembrane helix</keyword>
<keyword id="KW-0813">Transport</keyword>
<evidence type="ECO:0000250" key="1"/>
<evidence type="ECO:0000255" key="2"/>
<evidence type="ECO:0000305" key="3"/>
<reference key="1">
    <citation type="journal article" date="2005" name="Nature">
        <title>The genome of the social amoeba Dictyostelium discoideum.</title>
        <authorList>
            <person name="Eichinger L."/>
            <person name="Pachebat J.A."/>
            <person name="Gloeckner G."/>
            <person name="Rajandream M.A."/>
            <person name="Sucgang R."/>
            <person name="Berriman M."/>
            <person name="Song J."/>
            <person name="Olsen R."/>
            <person name="Szafranski K."/>
            <person name="Xu Q."/>
            <person name="Tunggal B."/>
            <person name="Kummerfeld S."/>
            <person name="Madera M."/>
            <person name="Konfortov B.A."/>
            <person name="Rivero F."/>
            <person name="Bankier A.T."/>
            <person name="Lehmann R."/>
            <person name="Hamlin N."/>
            <person name="Davies R."/>
            <person name="Gaudet P."/>
            <person name="Fey P."/>
            <person name="Pilcher K."/>
            <person name="Chen G."/>
            <person name="Saunders D."/>
            <person name="Sodergren E.J."/>
            <person name="Davis P."/>
            <person name="Kerhornou A."/>
            <person name="Nie X."/>
            <person name="Hall N."/>
            <person name="Anjard C."/>
            <person name="Hemphill L."/>
            <person name="Bason N."/>
            <person name="Farbrother P."/>
            <person name="Desany B."/>
            <person name="Just E."/>
            <person name="Morio T."/>
            <person name="Rost R."/>
            <person name="Churcher C.M."/>
            <person name="Cooper J."/>
            <person name="Haydock S."/>
            <person name="van Driessche N."/>
            <person name="Cronin A."/>
            <person name="Goodhead I."/>
            <person name="Muzny D.M."/>
            <person name="Mourier T."/>
            <person name="Pain A."/>
            <person name="Lu M."/>
            <person name="Harper D."/>
            <person name="Lindsay R."/>
            <person name="Hauser H."/>
            <person name="James K.D."/>
            <person name="Quiles M."/>
            <person name="Madan Babu M."/>
            <person name="Saito T."/>
            <person name="Buchrieser C."/>
            <person name="Wardroper A."/>
            <person name="Felder M."/>
            <person name="Thangavelu M."/>
            <person name="Johnson D."/>
            <person name="Knights A."/>
            <person name="Loulseged H."/>
            <person name="Mungall K.L."/>
            <person name="Oliver K."/>
            <person name="Price C."/>
            <person name="Quail M.A."/>
            <person name="Urushihara H."/>
            <person name="Hernandez J."/>
            <person name="Rabbinowitsch E."/>
            <person name="Steffen D."/>
            <person name="Sanders M."/>
            <person name="Ma J."/>
            <person name="Kohara Y."/>
            <person name="Sharp S."/>
            <person name="Simmonds M.N."/>
            <person name="Spiegler S."/>
            <person name="Tivey A."/>
            <person name="Sugano S."/>
            <person name="White B."/>
            <person name="Walker D."/>
            <person name="Woodward J.R."/>
            <person name="Winckler T."/>
            <person name="Tanaka Y."/>
            <person name="Shaulsky G."/>
            <person name="Schleicher M."/>
            <person name="Weinstock G.M."/>
            <person name="Rosenthal A."/>
            <person name="Cox E.C."/>
            <person name="Chisholm R.L."/>
            <person name="Gibbs R.A."/>
            <person name="Loomis W.F."/>
            <person name="Platzer M."/>
            <person name="Kay R.R."/>
            <person name="Williams J.G."/>
            <person name="Dear P.H."/>
            <person name="Noegel A.A."/>
            <person name="Barrell B.G."/>
            <person name="Kuspa A."/>
        </authorList>
    </citation>
    <scope>NUCLEOTIDE SEQUENCE [LARGE SCALE GENOMIC DNA]</scope>
    <source>
        <strain>AX4</strain>
    </source>
</reference>
<reference key="2">
    <citation type="journal article" date="2007" name="Biochimie">
        <title>Mitochondrial carrier family: repertoire and peculiarities of the cellular slime mould Dictyostelium discoideum.</title>
        <authorList>
            <person name="Satre M."/>
            <person name="Mattei S."/>
            <person name="Aubry L."/>
            <person name="Gaudet P."/>
            <person name="Pelosi L."/>
            <person name="Brandolin G."/>
            <person name="Klein G."/>
        </authorList>
    </citation>
    <scope>REVIEW</scope>
</reference>
<name>MCFM_DICDI</name>